<dbReference type="EMBL" id="CP000948">
    <property type="protein sequence ID" value="ACB05190.1"/>
    <property type="molecule type" value="Genomic_DNA"/>
</dbReference>
<dbReference type="RefSeq" id="WP_001196062.1">
    <property type="nucleotide sequence ID" value="NC_010473.1"/>
</dbReference>
<dbReference type="SMR" id="B1XDV3"/>
<dbReference type="GeneID" id="93777620"/>
<dbReference type="KEGG" id="ecd:ECDH10B_4398"/>
<dbReference type="HOGENOM" id="CLU_078938_4_1_6"/>
<dbReference type="GO" id="GO:1990904">
    <property type="term" value="C:ribonucleoprotein complex"/>
    <property type="evidence" value="ECO:0007669"/>
    <property type="project" value="UniProtKB-KW"/>
</dbReference>
<dbReference type="GO" id="GO:0005840">
    <property type="term" value="C:ribosome"/>
    <property type="evidence" value="ECO:0007669"/>
    <property type="project" value="UniProtKB-KW"/>
</dbReference>
<dbReference type="GO" id="GO:0019843">
    <property type="term" value="F:rRNA binding"/>
    <property type="evidence" value="ECO:0007669"/>
    <property type="project" value="UniProtKB-UniRule"/>
</dbReference>
<dbReference type="GO" id="GO:0003735">
    <property type="term" value="F:structural constituent of ribosome"/>
    <property type="evidence" value="ECO:0007669"/>
    <property type="project" value="InterPro"/>
</dbReference>
<dbReference type="GO" id="GO:0006412">
    <property type="term" value="P:translation"/>
    <property type="evidence" value="ECO:0007669"/>
    <property type="project" value="UniProtKB-UniRule"/>
</dbReference>
<dbReference type="FunFam" id="3.10.430.100:FF:000001">
    <property type="entry name" value="50S ribosomal protein L9"/>
    <property type="match status" value="1"/>
</dbReference>
<dbReference type="FunFam" id="3.40.5.10:FF:000001">
    <property type="entry name" value="50S ribosomal protein L9"/>
    <property type="match status" value="1"/>
</dbReference>
<dbReference type="Gene3D" id="3.10.430.100">
    <property type="entry name" value="Ribosomal protein L9, C-terminal domain"/>
    <property type="match status" value="1"/>
</dbReference>
<dbReference type="Gene3D" id="3.40.5.10">
    <property type="entry name" value="Ribosomal protein L9, N-terminal domain"/>
    <property type="match status" value="1"/>
</dbReference>
<dbReference type="HAMAP" id="MF_00503">
    <property type="entry name" value="Ribosomal_bL9"/>
    <property type="match status" value="1"/>
</dbReference>
<dbReference type="InterPro" id="IPR000244">
    <property type="entry name" value="Ribosomal_bL9"/>
</dbReference>
<dbReference type="InterPro" id="IPR009027">
    <property type="entry name" value="Ribosomal_bL9/RNase_H1_N"/>
</dbReference>
<dbReference type="InterPro" id="IPR020594">
    <property type="entry name" value="Ribosomal_bL9_bac/chp"/>
</dbReference>
<dbReference type="InterPro" id="IPR020069">
    <property type="entry name" value="Ribosomal_bL9_C"/>
</dbReference>
<dbReference type="InterPro" id="IPR036791">
    <property type="entry name" value="Ribosomal_bL9_C_sf"/>
</dbReference>
<dbReference type="InterPro" id="IPR020070">
    <property type="entry name" value="Ribosomal_bL9_N"/>
</dbReference>
<dbReference type="InterPro" id="IPR036935">
    <property type="entry name" value="Ribosomal_bL9_N_sf"/>
</dbReference>
<dbReference type="NCBIfam" id="TIGR00158">
    <property type="entry name" value="L9"/>
    <property type="match status" value="1"/>
</dbReference>
<dbReference type="PANTHER" id="PTHR21368">
    <property type="entry name" value="50S RIBOSOMAL PROTEIN L9"/>
    <property type="match status" value="1"/>
</dbReference>
<dbReference type="Pfam" id="PF03948">
    <property type="entry name" value="Ribosomal_L9_C"/>
    <property type="match status" value="1"/>
</dbReference>
<dbReference type="Pfam" id="PF01281">
    <property type="entry name" value="Ribosomal_L9_N"/>
    <property type="match status" value="1"/>
</dbReference>
<dbReference type="SUPFAM" id="SSF55658">
    <property type="entry name" value="L9 N-domain-like"/>
    <property type="match status" value="1"/>
</dbReference>
<dbReference type="SUPFAM" id="SSF55653">
    <property type="entry name" value="Ribosomal protein L9 C-domain"/>
    <property type="match status" value="1"/>
</dbReference>
<dbReference type="PROSITE" id="PS00651">
    <property type="entry name" value="RIBOSOMAL_L9"/>
    <property type="match status" value="1"/>
</dbReference>
<comment type="function">
    <text evidence="1">Binds to the 23S rRNA.</text>
</comment>
<comment type="similarity">
    <text evidence="1">Belongs to the bacterial ribosomal protein bL9 family.</text>
</comment>
<proteinExistence type="inferred from homology"/>
<protein>
    <recommendedName>
        <fullName evidence="1">Large ribosomal subunit protein bL9</fullName>
    </recommendedName>
    <alternativeName>
        <fullName evidence="2">50S ribosomal protein L9</fullName>
    </alternativeName>
</protein>
<feature type="chain" id="PRO_1000126908" description="Large ribosomal subunit protein bL9">
    <location>
        <begin position="1"/>
        <end position="149"/>
    </location>
</feature>
<feature type="modified residue" description="N6-acetyllysine" evidence="1">
    <location>
        <position position="89"/>
    </location>
</feature>
<reference key="1">
    <citation type="journal article" date="2008" name="J. Bacteriol.">
        <title>The complete genome sequence of Escherichia coli DH10B: insights into the biology of a laboratory workhorse.</title>
        <authorList>
            <person name="Durfee T."/>
            <person name="Nelson R."/>
            <person name="Baldwin S."/>
            <person name="Plunkett G. III"/>
            <person name="Burland V."/>
            <person name="Mau B."/>
            <person name="Petrosino J.F."/>
            <person name="Qin X."/>
            <person name="Muzny D.M."/>
            <person name="Ayele M."/>
            <person name="Gibbs R.A."/>
            <person name="Csorgo B."/>
            <person name="Posfai G."/>
            <person name="Weinstock G.M."/>
            <person name="Blattner F.R."/>
        </authorList>
    </citation>
    <scope>NUCLEOTIDE SEQUENCE [LARGE SCALE GENOMIC DNA]</scope>
    <source>
        <strain>K12 / DH10B</strain>
    </source>
</reference>
<evidence type="ECO:0000255" key="1">
    <source>
        <dbReference type="HAMAP-Rule" id="MF_00503"/>
    </source>
</evidence>
<evidence type="ECO:0000305" key="2"/>
<accession>B1XDV3</accession>
<keyword id="KW-0007">Acetylation</keyword>
<keyword id="KW-0687">Ribonucleoprotein</keyword>
<keyword id="KW-0689">Ribosomal protein</keyword>
<keyword id="KW-0694">RNA-binding</keyword>
<keyword id="KW-0699">rRNA-binding</keyword>
<organism>
    <name type="scientific">Escherichia coli (strain K12 / DH10B)</name>
    <dbReference type="NCBI Taxonomy" id="316385"/>
    <lineage>
        <taxon>Bacteria</taxon>
        <taxon>Pseudomonadati</taxon>
        <taxon>Pseudomonadota</taxon>
        <taxon>Gammaproteobacteria</taxon>
        <taxon>Enterobacterales</taxon>
        <taxon>Enterobacteriaceae</taxon>
        <taxon>Escherichia</taxon>
    </lineage>
</organism>
<sequence>MQVILLDKVANLGSLGDQVNVKAGYARNFLVPQGKAVPATKKNIEFFEARRAELEAKLAEVLAAANARAEKINALETVTIASKAGDEGKLFGSIGTRDIADAVTAAGVEVAKSEVRLPNGVLRTTGEHEVSFQVHSEVFAKVIVNVVAE</sequence>
<name>RL9_ECODH</name>
<gene>
    <name evidence="1" type="primary">rplI</name>
    <name type="ordered locus">ECDH10B_4398</name>
</gene>